<gene>
    <name evidence="1" type="primary">opgH</name>
    <name type="ordered locus">Sbal223_2396</name>
</gene>
<evidence type="ECO:0000255" key="1">
    <source>
        <dbReference type="HAMAP-Rule" id="MF_01072"/>
    </source>
</evidence>
<evidence type="ECO:0000256" key="2">
    <source>
        <dbReference type="SAM" id="MobiDB-lite"/>
    </source>
</evidence>
<proteinExistence type="inferred from homology"/>
<comment type="function">
    <text evidence="1">Involved in the biosynthesis of osmoregulated periplasmic glucans (OPGs).</text>
</comment>
<comment type="pathway">
    <text evidence="1">Glycan metabolism; osmoregulated periplasmic glucan (OPG) biosynthesis.</text>
</comment>
<comment type="subcellular location">
    <subcellularLocation>
        <location evidence="1">Cell inner membrane</location>
        <topology evidence="1">Multi-pass membrane protein</topology>
    </subcellularLocation>
</comment>
<comment type="similarity">
    <text evidence="1">Belongs to the glycosyltransferase 2 family. OpgH subfamily.</text>
</comment>
<accession>B8E7D2</accession>
<protein>
    <recommendedName>
        <fullName evidence="1">Glucans biosynthesis glucosyltransferase H</fullName>
        <ecNumber evidence="1">2.4.1.-</ecNumber>
    </recommendedName>
</protein>
<reference key="1">
    <citation type="submission" date="2008-12" db="EMBL/GenBank/DDBJ databases">
        <title>Complete sequence of chromosome of Shewanella baltica OS223.</title>
        <authorList>
            <consortium name="US DOE Joint Genome Institute"/>
            <person name="Lucas S."/>
            <person name="Copeland A."/>
            <person name="Lapidus A."/>
            <person name="Glavina del Rio T."/>
            <person name="Dalin E."/>
            <person name="Tice H."/>
            <person name="Bruce D."/>
            <person name="Goodwin L."/>
            <person name="Pitluck S."/>
            <person name="Chertkov O."/>
            <person name="Meincke L."/>
            <person name="Brettin T."/>
            <person name="Detter J.C."/>
            <person name="Han C."/>
            <person name="Kuske C.R."/>
            <person name="Larimer F."/>
            <person name="Land M."/>
            <person name="Hauser L."/>
            <person name="Kyrpides N."/>
            <person name="Ovchinnikova G."/>
            <person name="Brettar I."/>
            <person name="Rodrigues J."/>
            <person name="Konstantinidis K."/>
            <person name="Tiedje J."/>
        </authorList>
    </citation>
    <scope>NUCLEOTIDE SEQUENCE [LARGE SCALE GENOMIC DNA]</scope>
    <source>
        <strain>OS223</strain>
    </source>
</reference>
<name>OPGH_SHEB2</name>
<feature type="chain" id="PRO_1000149761" description="Glucans biosynthesis glucosyltransferase H">
    <location>
        <begin position="1"/>
        <end position="727"/>
    </location>
</feature>
<feature type="transmembrane region" description="Helical" evidence="1">
    <location>
        <begin position="58"/>
        <end position="78"/>
    </location>
</feature>
<feature type="transmembrane region" description="Helical" evidence="1">
    <location>
        <begin position="97"/>
        <end position="117"/>
    </location>
</feature>
<feature type="transmembrane region" description="Helical" evidence="1">
    <location>
        <begin position="278"/>
        <end position="298"/>
    </location>
</feature>
<feature type="transmembrane region" description="Helical" evidence="1">
    <location>
        <begin position="408"/>
        <end position="428"/>
    </location>
</feature>
<feature type="transmembrane region" description="Helical" evidence="1">
    <location>
        <begin position="460"/>
        <end position="480"/>
    </location>
</feature>
<feature type="transmembrane region" description="Helical" evidence="1">
    <location>
        <begin position="496"/>
        <end position="516"/>
    </location>
</feature>
<feature type="transmembrane region" description="Helical" evidence="1">
    <location>
        <begin position="572"/>
        <end position="592"/>
    </location>
</feature>
<feature type="region of interest" description="Disordered" evidence="2">
    <location>
        <begin position="18"/>
        <end position="38"/>
    </location>
</feature>
<sequence>MTVSENSVLETEVLVGGSAMPNERPGAMEPQNLSKMPEGFPRRSTVANGVRSRASRRFLVVGGALLLSLFAIYEMGAVFSIGGITPLEYLVLALFAVNFCWIALAFCSGIAGFLILLRKPRAKDLQVTELHTRTAILMPTYNESPDRVFSAVSVMAETLSQTGHGHAFDWFILSDTTDPDIALLEEQAFLVLRQETHKHSRVYYRRRRKNVARKAGNVADFCRRWGSRYDHLLVLDADSLMESSTITGLAQRMQADPDAGLIQTIPSLINGTTLMARLQQFAARIYGPVIGTGLGWWVQKEGNFWGHNAIIRTEAFMTAAGLPNLKGKPPFGGHIMSHDFVEAALIRRAGWSVVIAYDLPGSYEECPPSIIDLAVRDRRWCQGNLQHSRILPTKGLHWVSRLHLLTGIMAYLSSPFWLMLILTGLMLALQAHFIRPEYFTDQFSLFPTWPIMDSDRALRLFYITMGVLFGPKIFGVLLLLKDGEFARSVGGRIKAIFSVIFEVILSALIAPIMMFIHCGAVMSILMGRDSGWSPQRRDDGSMPWMTLIYRHRWHMLAGVMLGYAAILDSLTLLAWMSPALIGLWIAVPISAWTGSVKIGEVFKRAGILATPEERNPAQICLQAQDARAAYQKHIAEPWTLAQVLKDPALMELHLAMVDKQPLRAAGTPIEAMEAIVHVKVHEARCQQSALAVLNRQEMAMVLANPLMLRSLQKLPEQFVEEDLVSFC</sequence>
<dbReference type="EC" id="2.4.1.-" evidence="1"/>
<dbReference type="EMBL" id="CP001252">
    <property type="protein sequence ID" value="ACK46891.1"/>
    <property type="molecule type" value="Genomic_DNA"/>
</dbReference>
<dbReference type="RefSeq" id="WP_012587805.1">
    <property type="nucleotide sequence ID" value="NC_011663.1"/>
</dbReference>
<dbReference type="CAZy" id="GT2">
    <property type="family name" value="Glycosyltransferase Family 2"/>
</dbReference>
<dbReference type="KEGG" id="sbp:Sbal223_2396"/>
<dbReference type="HOGENOM" id="CLU_015730_1_0_6"/>
<dbReference type="UniPathway" id="UPA00637"/>
<dbReference type="Proteomes" id="UP000002507">
    <property type="component" value="Chromosome"/>
</dbReference>
<dbReference type="GO" id="GO:0005886">
    <property type="term" value="C:plasma membrane"/>
    <property type="evidence" value="ECO:0007669"/>
    <property type="project" value="UniProtKB-SubCell"/>
</dbReference>
<dbReference type="GO" id="GO:0016758">
    <property type="term" value="F:hexosyltransferase activity"/>
    <property type="evidence" value="ECO:0007669"/>
    <property type="project" value="UniProtKB-UniRule"/>
</dbReference>
<dbReference type="GO" id="GO:0009250">
    <property type="term" value="P:glucan biosynthetic process"/>
    <property type="evidence" value="ECO:0007669"/>
    <property type="project" value="UniProtKB-UniRule"/>
</dbReference>
<dbReference type="CDD" id="cd04191">
    <property type="entry name" value="Glucan_BSP_MdoH"/>
    <property type="match status" value="1"/>
</dbReference>
<dbReference type="FunFam" id="3.90.550.10:FF:000047">
    <property type="entry name" value="Glucans biosynthesis glucosyltransferase H"/>
    <property type="match status" value="1"/>
</dbReference>
<dbReference type="Gene3D" id="3.90.550.10">
    <property type="entry name" value="Spore Coat Polysaccharide Biosynthesis Protein SpsA, Chain A"/>
    <property type="match status" value="1"/>
</dbReference>
<dbReference type="HAMAP" id="MF_01072">
    <property type="entry name" value="MdoH_OpgH"/>
    <property type="match status" value="1"/>
</dbReference>
<dbReference type="InterPro" id="IPR023725">
    <property type="entry name" value="Glucans_biosynth_gluTrFase_H"/>
</dbReference>
<dbReference type="InterPro" id="IPR001173">
    <property type="entry name" value="Glyco_trans_2-like"/>
</dbReference>
<dbReference type="InterPro" id="IPR050321">
    <property type="entry name" value="Glycosyltr_2/OpgH_subfam"/>
</dbReference>
<dbReference type="InterPro" id="IPR029044">
    <property type="entry name" value="Nucleotide-diphossugar_trans"/>
</dbReference>
<dbReference type="NCBIfam" id="NF003956">
    <property type="entry name" value="PRK05454.1-3"/>
    <property type="match status" value="1"/>
</dbReference>
<dbReference type="NCBIfam" id="NF003958">
    <property type="entry name" value="PRK05454.2-1"/>
    <property type="match status" value="1"/>
</dbReference>
<dbReference type="NCBIfam" id="NF003962">
    <property type="entry name" value="PRK05454.2-5"/>
    <property type="match status" value="1"/>
</dbReference>
<dbReference type="PANTHER" id="PTHR43867">
    <property type="entry name" value="CELLULOSE SYNTHASE CATALYTIC SUBUNIT A [UDP-FORMING]"/>
    <property type="match status" value="1"/>
</dbReference>
<dbReference type="PANTHER" id="PTHR43867:SF5">
    <property type="entry name" value="GLUCANS BIOSYNTHESIS GLUCOSYLTRANSFERASE H"/>
    <property type="match status" value="1"/>
</dbReference>
<dbReference type="Pfam" id="PF13632">
    <property type="entry name" value="Glyco_trans_2_3"/>
    <property type="match status" value="1"/>
</dbReference>
<dbReference type="SUPFAM" id="SSF53448">
    <property type="entry name" value="Nucleotide-diphospho-sugar transferases"/>
    <property type="match status" value="1"/>
</dbReference>
<organism>
    <name type="scientific">Shewanella baltica (strain OS223)</name>
    <dbReference type="NCBI Taxonomy" id="407976"/>
    <lineage>
        <taxon>Bacteria</taxon>
        <taxon>Pseudomonadati</taxon>
        <taxon>Pseudomonadota</taxon>
        <taxon>Gammaproteobacteria</taxon>
        <taxon>Alteromonadales</taxon>
        <taxon>Shewanellaceae</taxon>
        <taxon>Shewanella</taxon>
    </lineage>
</organism>
<keyword id="KW-0997">Cell inner membrane</keyword>
<keyword id="KW-1003">Cell membrane</keyword>
<keyword id="KW-0328">Glycosyltransferase</keyword>
<keyword id="KW-0472">Membrane</keyword>
<keyword id="KW-0808">Transferase</keyword>
<keyword id="KW-0812">Transmembrane</keyword>
<keyword id="KW-1133">Transmembrane helix</keyword>